<organism>
    <name type="scientific">Geobacillus thermodenitrificans (strain NG80-2)</name>
    <dbReference type="NCBI Taxonomy" id="420246"/>
    <lineage>
        <taxon>Bacteria</taxon>
        <taxon>Bacillati</taxon>
        <taxon>Bacillota</taxon>
        <taxon>Bacilli</taxon>
        <taxon>Bacillales</taxon>
        <taxon>Anoxybacillaceae</taxon>
        <taxon>Geobacillus</taxon>
    </lineage>
</organism>
<reference key="1">
    <citation type="journal article" date="2007" name="Proc. Natl. Acad. Sci. U.S.A.">
        <title>Genome and proteome of long-chain alkane degrading Geobacillus thermodenitrificans NG80-2 isolated from a deep-subsurface oil reservoir.</title>
        <authorList>
            <person name="Feng L."/>
            <person name="Wang W."/>
            <person name="Cheng J."/>
            <person name="Ren Y."/>
            <person name="Zhao G."/>
            <person name="Gao C."/>
            <person name="Tang Y."/>
            <person name="Liu X."/>
            <person name="Han W."/>
            <person name="Peng X."/>
            <person name="Liu R."/>
            <person name="Wang L."/>
        </authorList>
    </citation>
    <scope>NUCLEOTIDE SEQUENCE [LARGE SCALE GENOMIC DNA]</scope>
    <source>
        <strain>NG80-2</strain>
    </source>
</reference>
<reference evidence="3" key="2">
    <citation type="journal article" date="2016" name="Proc. Natl. Acad. Sci. U.S.A.">
        <title>Structural basis for the CsrA-dependent modulation of translation initiation by an ancient regulatory protein.</title>
        <authorList>
            <person name="Altegoer F."/>
            <person name="Rensing S.A."/>
            <person name="Bange G."/>
        </authorList>
    </citation>
    <scope>X-RAY CRYSTALLOGRAPHY (2.30 ANGSTROMS) OF 2-82 IN COMPLEX WITH FLIW</scope>
    <scope>SUBUNIT</scope>
    <scope>DOMAIN</scope>
    <source>
        <strain>NG-80</strain>
    </source>
</reference>
<name>CSRA_GEOTN</name>
<evidence type="ECO:0000255" key="1">
    <source>
        <dbReference type="HAMAP-Rule" id="MF_00167"/>
    </source>
</evidence>
<evidence type="ECO:0000269" key="2">
    <source>
    </source>
</evidence>
<evidence type="ECO:0007744" key="3">
    <source>
        <dbReference type="PDB" id="5DMB"/>
    </source>
</evidence>
<evidence type="ECO:0007829" key="4">
    <source>
        <dbReference type="PDB" id="5DMB"/>
    </source>
</evidence>
<gene>
    <name evidence="1" type="primary">csrA</name>
    <name type="ordered locus">GTNG_3058</name>
</gene>
<protein>
    <recommendedName>
        <fullName evidence="1">Translational regulator CsrA</fullName>
    </recommendedName>
</protein>
<sequence>MLVLTRKLKEAIQIGDDIEITVLAIQGDQVKLGINAPKHVEIHRKEIYLAIQAENNAASHASKSSLKRLNEQLKHLKGGKQA</sequence>
<accession>A4ISU9</accession>
<dbReference type="EMBL" id="CP000557">
    <property type="protein sequence ID" value="ABO68403.1"/>
    <property type="molecule type" value="Genomic_DNA"/>
</dbReference>
<dbReference type="RefSeq" id="WP_011888204.1">
    <property type="nucleotide sequence ID" value="NC_009328.1"/>
</dbReference>
<dbReference type="PDB" id="5DMB">
    <property type="method" value="X-ray"/>
    <property type="resolution" value="2.30 A"/>
    <property type="chains" value="D=2-82"/>
</dbReference>
<dbReference type="PDBsum" id="5DMB"/>
<dbReference type="SMR" id="A4ISU9"/>
<dbReference type="KEGG" id="gtn:GTNG_3058"/>
<dbReference type="eggNOG" id="COG1551">
    <property type="taxonomic scope" value="Bacteria"/>
</dbReference>
<dbReference type="HOGENOM" id="CLU_164837_0_2_9"/>
<dbReference type="Proteomes" id="UP000001578">
    <property type="component" value="Chromosome"/>
</dbReference>
<dbReference type="GO" id="GO:0005829">
    <property type="term" value="C:cytosol"/>
    <property type="evidence" value="ECO:0007669"/>
    <property type="project" value="TreeGrafter"/>
</dbReference>
<dbReference type="GO" id="GO:0048027">
    <property type="term" value="F:mRNA 5'-UTR binding"/>
    <property type="evidence" value="ECO:0007669"/>
    <property type="project" value="UniProtKB-UniRule"/>
</dbReference>
<dbReference type="GO" id="GO:0044781">
    <property type="term" value="P:bacterial-type flagellum organization"/>
    <property type="evidence" value="ECO:0007669"/>
    <property type="project" value="UniProtKB-KW"/>
</dbReference>
<dbReference type="GO" id="GO:0006402">
    <property type="term" value="P:mRNA catabolic process"/>
    <property type="evidence" value="ECO:0007669"/>
    <property type="project" value="InterPro"/>
</dbReference>
<dbReference type="GO" id="GO:0045947">
    <property type="term" value="P:negative regulation of translational initiation"/>
    <property type="evidence" value="ECO:0007669"/>
    <property type="project" value="UniProtKB-UniRule"/>
</dbReference>
<dbReference type="GO" id="GO:1902208">
    <property type="term" value="P:regulation of bacterial-type flagellum assembly"/>
    <property type="evidence" value="ECO:0007669"/>
    <property type="project" value="UniProtKB-UniRule"/>
</dbReference>
<dbReference type="GO" id="GO:0006109">
    <property type="term" value="P:regulation of carbohydrate metabolic process"/>
    <property type="evidence" value="ECO:0007669"/>
    <property type="project" value="InterPro"/>
</dbReference>
<dbReference type="FunFam" id="2.60.40.4380:FF:000002">
    <property type="entry name" value="Translational regulator CsrA"/>
    <property type="match status" value="1"/>
</dbReference>
<dbReference type="Gene3D" id="2.60.40.4380">
    <property type="entry name" value="Translational regulator CsrA"/>
    <property type="match status" value="1"/>
</dbReference>
<dbReference type="HAMAP" id="MF_00167">
    <property type="entry name" value="CsrA"/>
    <property type="match status" value="1"/>
</dbReference>
<dbReference type="InterPro" id="IPR003751">
    <property type="entry name" value="CsrA"/>
</dbReference>
<dbReference type="InterPro" id="IPR036107">
    <property type="entry name" value="CsrA_sf"/>
</dbReference>
<dbReference type="NCBIfam" id="TIGR00202">
    <property type="entry name" value="csrA"/>
    <property type="match status" value="1"/>
</dbReference>
<dbReference type="NCBIfam" id="NF002469">
    <property type="entry name" value="PRK01712.1"/>
    <property type="match status" value="1"/>
</dbReference>
<dbReference type="PANTHER" id="PTHR34984">
    <property type="entry name" value="CARBON STORAGE REGULATOR"/>
    <property type="match status" value="1"/>
</dbReference>
<dbReference type="PANTHER" id="PTHR34984:SF1">
    <property type="entry name" value="CARBON STORAGE REGULATOR"/>
    <property type="match status" value="1"/>
</dbReference>
<dbReference type="Pfam" id="PF02599">
    <property type="entry name" value="CsrA"/>
    <property type="match status" value="1"/>
</dbReference>
<dbReference type="SUPFAM" id="SSF117130">
    <property type="entry name" value="CsrA-like"/>
    <property type="match status" value="1"/>
</dbReference>
<comment type="function">
    <text evidence="1">A translational regulator that binds mRNA to regulate translation initiation and/or mRNA stability. Usually binds in the 5'-UTR at or near the Shine-Dalgarno sequence preventing ribosome-binding, thus repressing translation. Its main target seems to be the major flagellin gene, while its function is anatagonized by FliW.</text>
</comment>
<comment type="subunit">
    <text evidence="2">Homodimer; the beta-strands of each monomer intercalate to form a hydrophobic core while the alpha-helices form wings that extend away from the core. Each of the alpha-helical wings interacts with an FliW monomer, yielding a FliW-CsrA(2)-FliW complex.</text>
</comment>
<comment type="subcellular location">
    <subcellularLocation>
        <location evidence="1">Cytoplasm</location>
    </subcellularLocation>
</comment>
<comment type="domain">
    <text>Interacts with FliW via its C-terminal alpha helices (approximately 44-57 and 63-74).</text>
</comment>
<comment type="similarity">
    <text evidence="1">Belongs to the CsrA/RsmA family.</text>
</comment>
<keyword id="KW-0002">3D-structure</keyword>
<keyword id="KW-1005">Bacterial flagellum biogenesis</keyword>
<keyword id="KW-0963">Cytoplasm</keyword>
<keyword id="KW-0678">Repressor</keyword>
<keyword id="KW-0694">RNA-binding</keyword>
<keyword id="KW-0810">Translation regulation</keyword>
<feature type="chain" id="PRO_1000023385" description="Translational regulator CsrA">
    <location>
        <begin position="1"/>
        <end position="82"/>
    </location>
</feature>
<feature type="strand" evidence="4">
    <location>
        <begin position="11"/>
        <end position="14"/>
    </location>
</feature>
<feature type="turn" evidence="4">
    <location>
        <begin position="15"/>
        <end position="17"/>
    </location>
</feature>
<feature type="strand" evidence="4">
    <location>
        <begin position="18"/>
        <end position="25"/>
    </location>
</feature>
<feature type="strand" evidence="4">
    <location>
        <begin position="27"/>
        <end position="35"/>
    </location>
</feature>
<feature type="helix" evidence="4">
    <location>
        <begin position="45"/>
        <end position="57"/>
    </location>
</feature>
<feature type="helix" evidence="4">
    <location>
        <begin position="63"/>
        <end position="72"/>
    </location>
</feature>
<proteinExistence type="evidence at protein level"/>